<feature type="chain" id="PRO_0000268479" description="Bifunctional protein FolD">
    <location>
        <begin position="1"/>
        <end position="283"/>
    </location>
</feature>
<feature type="binding site" evidence="1">
    <location>
        <begin position="166"/>
        <end position="168"/>
    </location>
    <ligand>
        <name>NADP(+)</name>
        <dbReference type="ChEBI" id="CHEBI:58349"/>
    </ligand>
</feature>
<feature type="binding site" evidence="1">
    <location>
        <position position="191"/>
    </location>
    <ligand>
        <name>NADP(+)</name>
        <dbReference type="ChEBI" id="CHEBI:58349"/>
    </ligand>
</feature>
<feature type="binding site" evidence="1">
    <location>
        <position position="232"/>
    </location>
    <ligand>
        <name>NADP(+)</name>
        <dbReference type="ChEBI" id="CHEBI:58349"/>
    </ligand>
</feature>
<evidence type="ECO:0000255" key="1">
    <source>
        <dbReference type="HAMAP-Rule" id="MF_01576"/>
    </source>
</evidence>
<gene>
    <name evidence="1" type="primary">folD</name>
    <name type="ordered locus">RBE_0983</name>
</gene>
<organism>
    <name type="scientific">Rickettsia bellii (strain RML369-C)</name>
    <dbReference type="NCBI Taxonomy" id="336407"/>
    <lineage>
        <taxon>Bacteria</taxon>
        <taxon>Pseudomonadati</taxon>
        <taxon>Pseudomonadota</taxon>
        <taxon>Alphaproteobacteria</taxon>
        <taxon>Rickettsiales</taxon>
        <taxon>Rickettsiaceae</taxon>
        <taxon>Rickettsieae</taxon>
        <taxon>Rickettsia</taxon>
        <taxon>belli group</taxon>
    </lineage>
</organism>
<accession>Q1RHV0</accession>
<sequence length="283" mass="30267">MNNVIDGKALANEILSELKHEVQRLKDKTGESPKLAIVLVGDNPASIIYVKNKIKHANKIGIDTLLLNLPITIKTEDLIAKISELNLDQNVSGIIVQLPLPNSIDKNKILSAISPSKDVDGFHPLNVGYLHSGIDNGFVPCTALGCLEVIKKHEPNLSGKNAIIVGRSNIVGKPLSALLLKENCSVTICHSKSQNLSSITSKADIVVAAIGSPLKLTSGYFKPDAIVIDVGINRIGGNKIVGDVDFENVKSKVKYITPVPGGIGPMTIAFLLKNTVQAFKIYS</sequence>
<comment type="function">
    <text evidence="1">Catalyzes the oxidation of 5,10-methylenetetrahydrofolate to 5,10-methenyltetrahydrofolate and then the hydrolysis of 5,10-methenyltetrahydrofolate to 10-formyltetrahydrofolate.</text>
</comment>
<comment type="catalytic activity">
    <reaction evidence="1">
        <text>(6R)-5,10-methylene-5,6,7,8-tetrahydrofolate + NADP(+) = (6R)-5,10-methenyltetrahydrofolate + NADPH</text>
        <dbReference type="Rhea" id="RHEA:22812"/>
        <dbReference type="ChEBI" id="CHEBI:15636"/>
        <dbReference type="ChEBI" id="CHEBI:57455"/>
        <dbReference type="ChEBI" id="CHEBI:57783"/>
        <dbReference type="ChEBI" id="CHEBI:58349"/>
        <dbReference type="EC" id="1.5.1.5"/>
    </reaction>
</comment>
<comment type="catalytic activity">
    <reaction evidence="1">
        <text>(6R)-5,10-methenyltetrahydrofolate + H2O = (6R)-10-formyltetrahydrofolate + H(+)</text>
        <dbReference type="Rhea" id="RHEA:23700"/>
        <dbReference type="ChEBI" id="CHEBI:15377"/>
        <dbReference type="ChEBI" id="CHEBI:15378"/>
        <dbReference type="ChEBI" id="CHEBI:57455"/>
        <dbReference type="ChEBI" id="CHEBI:195366"/>
        <dbReference type="EC" id="3.5.4.9"/>
    </reaction>
</comment>
<comment type="pathway">
    <text evidence="1">One-carbon metabolism; tetrahydrofolate interconversion.</text>
</comment>
<comment type="subunit">
    <text evidence="1">Homodimer.</text>
</comment>
<comment type="similarity">
    <text evidence="1">Belongs to the tetrahydrofolate dehydrogenase/cyclohydrolase family.</text>
</comment>
<name>FOLD_RICBR</name>
<dbReference type="EC" id="1.5.1.5" evidence="1"/>
<dbReference type="EC" id="3.5.4.9" evidence="1"/>
<dbReference type="EMBL" id="CP000087">
    <property type="protein sequence ID" value="ABE05064.1"/>
    <property type="molecule type" value="Genomic_DNA"/>
</dbReference>
<dbReference type="RefSeq" id="WP_011477644.1">
    <property type="nucleotide sequence ID" value="NC_007940.1"/>
</dbReference>
<dbReference type="SMR" id="Q1RHV0"/>
<dbReference type="KEGG" id="rbe:RBE_0983"/>
<dbReference type="eggNOG" id="COG0190">
    <property type="taxonomic scope" value="Bacteria"/>
</dbReference>
<dbReference type="HOGENOM" id="CLU_034045_2_0_5"/>
<dbReference type="OrthoDB" id="9803580at2"/>
<dbReference type="UniPathway" id="UPA00193"/>
<dbReference type="Proteomes" id="UP000001951">
    <property type="component" value="Chromosome"/>
</dbReference>
<dbReference type="GO" id="GO:0005829">
    <property type="term" value="C:cytosol"/>
    <property type="evidence" value="ECO:0007669"/>
    <property type="project" value="TreeGrafter"/>
</dbReference>
<dbReference type="GO" id="GO:0004477">
    <property type="term" value="F:methenyltetrahydrofolate cyclohydrolase activity"/>
    <property type="evidence" value="ECO:0007669"/>
    <property type="project" value="UniProtKB-UniRule"/>
</dbReference>
<dbReference type="GO" id="GO:0004488">
    <property type="term" value="F:methylenetetrahydrofolate dehydrogenase (NADP+) activity"/>
    <property type="evidence" value="ECO:0007669"/>
    <property type="project" value="UniProtKB-UniRule"/>
</dbReference>
<dbReference type="GO" id="GO:0000105">
    <property type="term" value="P:L-histidine biosynthetic process"/>
    <property type="evidence" value="ECO:0007669"/>
    <property type="project" value="UniProtKB-KW"/>
</dbReference>
<dbReference type="GO" id="GO:0009086">
    <property type="term" value="P:methionine biosynthetic process"/>
    <property type="evidence" value="ECO:0007669"/>
    <property type="project" value="UniProtKB-KW"/>
</dbReference>
<dbReference type="GO" id="GO:0006164">
    <property type="term" value="P:purine nucleotide biosynthetic process"/>
    <property type="evidence" value="ECO:0007669"/>
    <property type="project" value="UniProtKB-KW"/>
</dbReference>
<dbReference type="GO" id="GO:0035999">
    <property type="term" value="P:tetrahydrofolate interconversion"/>
    <property type="evidence" value="ECO:0007669"/>
    <property type="project" value="UniProtKB-UniRule"/>
</dbReference>
<dbReference type="CDD" id="cd01080">
    <property type="entry name" value="NAD_bind_m-THF_DH_Cyclohyd"/>
    <property type="match status" value="1"/>
</dbReference>
<dbReference type="FunFam" id="3.40.50.720:FF:000094">
    <property type="entry name" value="Bifunctional protein FolD"/>
    <property type="match status" value="1"/>
</dbReference>
<dbReference type="FunFam" id="3.40.50.10860:FF:000005">
    <property type="entry name" value="C-1-tetrahydrofolate synthase, cytoplasmic, putative"/>
    <property type="match status" value="1"/>
</dbReference>
<dbReference type="Gene3D" id="3.40.50.10860">
    <property type="entry name" value="Leucine Dehydrogenase, chain A, domain 1"/>
    <property type="match status" value="1"/>
</dbReference>
<dbReference type="Gene3D" id="3.40.50.720">
    <property type="entry name" value="NAD(P)-binding Rossmann-like Domain"/>
    <property type="match status" value="1"/>
</dbReference>
<dbReference type="HAMAP" id="MF_01576">
    <property type="entry name" value="THF_DHG_CYH"/>
    <property type="match status" value="1"/>
</dbReference>
<dbReference type="InterPro" id="IPR046346">
    <property type="entry name" value="Aminoacid_DH-like_N_sf"/>
</dbReference>
<dbReference type="InterPro" id="IPR036291">
    <property type="entry name" value="NAD(P)-bd_dom_sf"/>
</dbReference>
<dbReference type="InterPro" id="IPR000672">
    <property type="entry name" value="THF_DH/CycHdrlase"/>
</dbReference>
<dbReference type="InterPro" id="IPR020630">
    <property type="entry name" value="THF_DH/CycHdrlase_cat_dom"/>
</dbReference>
<dbReference type="InterPro" id="IPR020867">
    <property type="entry name" value="THF_DH/CycHdrlase_CS"/>
</dbReference>
<dbReference type="InterPro" id="IPR020631">
    <property type="entry name" value="THF_DH/CycHdrlase_NAD-bd_dom"/>
</dbReference>
<dbReference type="NCBIfam" id="NF010768">
    <property type="entry name" value="PRK14171.1"/>
    <property type="match status" value="1"/>
</dbReference>
<dbReference type="PANTHER" id="PTHR48099:SF5">
    <property type="entry name" value="C-1-TETRAHYDROFOLATE SYNTHASE, CYTOPLASMIC"/>
    <property type="match status" value="1"/>
</dbReference>
<dbReference type="PANTHER" id="PTHR48099">
    <property type="entry name" value="C-1-TETRAHYDROFOLATE SYNTHASE, CYTOPLASMIC-RELATED"/>
    <property type="match status" value="1"/>
</dbReference>
<dbReference type="Pfam" id="PF00763">
    <property type="entry name" value="THF_DHG_CYH"/>
    <property type="match status" value="1"/>
</dbReference>
<dbReference type="Pfam" id="PF02882">
    <property type="entry name" value="THF_DHG_CYH_C"/>
    <property type="match status" value="1"/>
</dbReference>
<dbReference type="PRINTS" id="PR00085">
    <property type="entry name" value="THFDHDRGNASE"/>
</dbReference>
<dbReference type="SUPFAM" id="SSF53223">
    <property type="entry name" value="Aminoacid dehydrogenase-like, N-terminal domain"/>
    <property type="match status" value="1"/>
</dbReference>
<dbReference type="SUPFAM" id="SSF51735">
    <property type="entry name" value="NAD(P)-binding Rossmann-fold domains"/>
    <property type="match status" value="1"/>
</dbReference>
<dbReference type="PROSITE" id="PS00766">
    <property type="entry name" value="THF_DHG_CYH_1"/>
    <property type="match status" value="1"/>
</dbReference>
<dbReference type="PROSITE" id="PS00767">
    <property type="entry name" value="THF_DHG_CYH_2"/>
    <property type="match status" value="1"/>
</dbReference>
<keyword id="KW-0028">Amino-acid biosynthesis</keyword>
<keyword id="KW-0368">Histidine biosynthesis</keyword>
<keyword id="KW-0378">Hydrolase</keyword>
<keyword id="KW-0486">Methionine biosynthesis</keyword>
<keyword id="KW-0511">Multifunctional enzyme</keyword>
<keyword id="KW-0521">NADP</keyword>
<keyword id="KW-0554">One-carbon metabolism</keyword>
<keyword id="KW-0560">Oxidoreductase</keyword>
<keyword id="KW-0658">Purine biosynthesis</keyword>
<proteinExistence type="inferred from homology"/>
<reference key="1">
    <citation type="journal article" date="2006" name="PLoS Genet.">
        <title>Genome sequence of Rickettsia bellii illuminates the role of amoebae in gene exchanges between intracellular pathogens.</title>
        <authorList>
            <person name="Ogata H."/>
            <person name="La Scola B."/>
            <person name="Audic S."/>
            <person name="Renesto P."/>
            <person name="Blanc G."/>
            <person name="Robert C."/>
            <person name="Fournier P.-E."/>
            <person name="Claverie J.-M."/>
            <person name="Raoult D."/>
        </authorList>
    </citation>
    <scope>NUCLEOTIDE SEQUENCE [LARGE SCALE GENOMIC DNA]</scope>
    <source>
        <strain>RML369-C</strain>
    </source>
</reference>
<protein>
    <recommendedName>
        <fullName evidence="1">Bifunctional protein FolD</fullName>
    </recommendedName>
    <domain>
        <recommendedName>
            <fullName evidence="1">Methylenetetrahydrofolate dehydrogenase</fullName>
            <ecNumber evidence="1">1.5.1.5</ecNumber>
        </recommendedName>
    </domain>
    <domain>
        <recommendedName>
            <fullName evidence="1">Methenyltetrahydrofolate cyclohydrolase</fullName>
            <ecNumber evidence="1">3.5.4.9</ecNumber>
        </recommendedName>
    </domain>
</protein>